<proteinExistence type="evidence at protein level"/>
<protein>
    <recommendedName>
        <fullName>Serine/threonine-protein kinase LATS2</fullName>
        <ecNumber evidence="3">2.7.11.1</ecNumber>
    </recommendedName>
    <alternativeName>
        <fullName>Kinase phosphorylated during mitosis protein</fullName>
    </alternativeName>
    <alternativeName>
        <fullName>Large tumor suppressor homolog 2</fullName>
    </alternativeName>
    <alternativeName>
        <fullName>Serine/threonine-protein kinase kpm</fullName>
    </alternativeName>
</protein>
<accession>Q7TSJ6</accession>
<accession>Q8CDJ4</accession>
<accession>Q9JMI3</accession>
<organism>
    <name type="scientific">Mus musculus</name>
    <name type="common">Mouse</name>
    <dbReference type="NCBI Taxonomy" id="10090"/>
    <lineage>
        <taxon>Eukaryota</taxon>
        <taxon>Metazoa</taxon>
        <taxon>Chordata</taxon>
        <taxon>Craniata</taxon>
        <taxon>Vertebrata</taxon>
        <taxon>Euteleostomi</taxon>
        <taxon>Mammalia</taxon>
        <taxon>Eutheria</taxon>
        <taxon>Euarchontoglires</taxon>
        <taxon>Glires</taxon>
        <taxon>Rodentia</taxon>
        <taxon>Myomorpha</taxon>
        <taxon>Muroidea</taxon>
        <taxon>Muridae</taxon>
        <taxon>Murinae</taxon>
        <taxon>Mus</taxon>
        <taxon>Mus</taxon>
    </lineage>
</organism>
<dbReference type="EC" id="2.7.11.1" evidence="3"/>
<dbReference type="EMBL" id="AB023958">
    <property type="protein sequence ID" value="BAA92380.1"/>
    <property type="molecule type" value="mRNA"/>
</dbReference>
<dbReference type="EMBL" id="AK029966">
    <property type="protein sequence ID" value="BAC26704.1"/>
    <property type="status" value="ALT_FRAME"/>
    <property type="molecule type" value="mRNA"/>
</dbReference>
<dbReference type="EMBL" id="BC053028">
    <property type="protein sequence ID" value="AAH53028.1"/>
    <property type="molecule type" value="mRNA"/>
</dbReference>
<dbReference type="CCDS" id="CCDS27158.1"/>
<dbReference type="RefSeq" id="NP_056586.2">
    <property type="nucleotide sequence ID" value="NM_015771.2"/>
</dbReference>
<dbReference type="PDB" id="2COS">
    <property type="method" value="NMR"/>
    <property type="chains" value="A=98-138"/>
</dbReference>
<dbReference type="PDBsum" id="2COS"/>
<dbReference type="SMR" id="Q7TSJ6"/>
<dbReference type="BioGRID" id="206050">
    <property type="interactions" value="2"/>
</dbReference>
<dbReference type="CORUM" id="Q7TSJ6"/>
<dbReference type="FunCoup" id="Q7TSJ6">
    <property type="interactions" value="1484"/>
</dbReference>
<dbReference type="IntAct" id="Q7TSJ6">
    <property type="interactions" value="123"/>
</dbReference>
<dbReference type="MINT" id="Q7TSJ6"/>
<dbReference type="STRING" id="10090.ENSMUSP00000022531"/>
<dbReference type="GlyGen" id="Q7TSJ6">
    <property type="glycosylation" value="3 sites"/>
</dbReference>
<dbReference type="iPTMnet" id="Q7TSJ6"/>
<dbReference type="PhosphoSitePlus" id="Q7TSJ6"/>
<dbReference type="SwissPalm" id="Q7TSJ6"/>
<dbReference type="jPOST" id="Q7TSJ6"/>
<dbReference type="PaxDb" id="10090-ENSMUSP00000022531"/>
<dbReference type="ProteomicsDB" id="290010"/>
<dbReference type="DNASU" id="50523"/>
<dbReference type="Ensembl" id="ENSMUST00000022531.14">
    <property type="protein sequence ID" value="ENSMUSP00000022531.8"/>
    <property type="gene ID" value="ENSMUSG00000021959.17"/>
</dbReference>
<dbReference type="GeneID" id="50523"/>
<dbReference type="KEGG" id="mmu:50523"/>
<dbReference type="UCSC" id="uc007udk.1">
    <property type="organism name" value="mouse"/>
</dbReference>
<dbReference type="AGR" id="MGI:1354386"/>
<dbReference type="CTD" id="26524"/>
<dbReference type="MGI" id="MGI:1354386">
    <property type="gene designation" value="Lats2"/>
</dbReference>
<dbReference type="VEuPathDB" id="HostDB:ENSMUSG00000021959"/>
<dbReference type="eggNOG" id="KOG0608">
    <property type="taxonomic scope" value="Eukaryota"/>
</dbReference>
<dbReference type="GeneTree" id="ENSGT00940000159161"/>
<dbReference type="HOGENOM" id="CLU_004885_1_2_1"/>
<dbReference type="InParanoid" id="Q7TSJ6"/>
<dbReference type="OMA" id="MEPSDSW"/>
<dbReference type="OrthoDB" id="3638488at2759"/>
<dbReference type="PhylomeDB" id="Q7TSJ6"/>
<dbReference type="TreeFam" id="TF351549"/>
<dbReference type="Reactome" id="R-MMU-2028269">
    <property type="pathway name" value="Signaling by Hippo"/>
</dbReference>
<dbReference type="BioGRID-ORCS" id="50523">
    <property type="hits" value="2 hits in 82 CRISPR screens"/>
</dbReference>
<dbReference type="CD-CODE" id="01CA17F3">
    <property type="entry name" value="Centrosome"/>
</dbReference>
<dbReference type="ChiTaRS" id="Lats2">
    <property type="organism name" value="mouse"/>
</dbReference>
<dbReference type="EvolutionaryTrace" id="Q7TSJ6"/>
<dbReference type="PRO" id="PR:Q7TSJ6"/>
<dbReference type="Proteomes" id="UP000000589">
    <property type="component" value="Chromosome 14"/>
</dbReference>
<dbReference type="RNAct" id="Q7TSJ6">
    <property type="molecule type" value="protein"/>
</dbReference>
<dbReference type="Bgee" id="ENSMUSG00000021959">
    <property type="expression patterns" value="Expressed in ascending aorta and 255 other cell types or tissues"/>
</dbReference>
<dbReference type="ExpressionAtlas" id="Q7TSJ6">
    <property type="expression patterns" value="baseline and differential"/>
</dbReference>
<dbReference type="GO" id="GO:0034451">
    <property type="term" value="C:centriolar satellite"/>
    <property type="evidence" value="ECO:0007669"/>
    <property type="project" value="Ensembl"/>
</dbReference>
<dbReference type="GO" id="GO:0005829">
    <property type="term" value="C:cytosol"/>
    <property type="evidence" value="ECO:0007669"/>
    <property type="project" value="Ensembl"/>
</dbReference>
<dbReference type="GO" id="GO:0005634">
    <property type="term" value="C:nucleus"/>
    <property type="evidence" value="ECO:0000266"/>
    <property type="project" value="MGI"/>
</dbReference>
<dbReference type="GO" id="GO:0000922">
    <property type="term" value="C:spindle pole"/>
    <property type="evidence" value="ECO:0000314"/>
    <property type="project" value="UniProtKB"/>
</dbReference>
<dbReference type="GO" id="GO:0005524">
    <property type="term" value="F:ATP binding"/>
    <property type="evidence" value="ECO:0000250"/>
    <property type="project" value="UniProtKB"/>
</dbReference>
<dbReference type="GO" id="GO:0046872">
    <property type="term" value="F:metal ion binding"/>
    <property type="evidence" value="ECO:0007669"/>
    <property type="project" value="UniProtKB-KW"/>
</dbReference>
<dbReference type="GO" id="GO:0106310">
    <property type="term" value="F:protein serine kinase activity"/>
    <property type="evidence" value="ECO:0007669"/>
    <property type="project" value="RHEA"/>
</dbReference>
<dbReference type="GO" id="GO:0004674">
    <property type="term" value="F:protein serine/threonine kinase activity"/>
    <property type="evidence" value="ECO:0000314"/>
    <property type="project" value="UniProtKB"/>
</dbReference>
<dbReference type="GO" id="GO:0060070">
    <property type="term" value="P:canonical Wnt signaling pathway"/>
    <property type="evidence" value="ECO:0000316"/>
    <property type="project" value="MGI"/>
</dbReference>
<dbReference type="GO" id="GO:0051301">
    <property type="term" value="P:cell division"/>
    <property type="evidence" value="ECO:0007669"/>
    <property type="project" value="UniProtKB-KW"/>
</dbReference>
<dbReference type="GO" id="GO:0000082">
    <property type="term" value="P:G1/S transition of mitotic cell cycle"/>
    <property type="evidence" value="ECO:0000314"/>
    <property type="project" value="UniProtKB"/>
</dbReference>
<dbReference type="GO" id="GO:0035329">
    <property type="term" value="P:hippo signaling"/>
    <property type="evidence" value="ECO:0000316"/>
    <property type="project" value="MGI"/>
</dbReference>
<dbReference type="GO" id="GO:0009755">
    <property type="term" value="P:hormone-mediated signaling pathway"/>
    <property type="evidence" value="ECO:0000250"/>
    <property type="project" value="UniProtKB"/>
</dbReference>
<dbReference type="GO" id="GO:0001827">
    <property type="term" value="P:inner cell mass cell fate commitment"/>
    <property type="evidence" value="ECO:0000316"/>
    <property type="project" value="MGI"/>
</dbReference>
<dbReference type="GO" id="GO:0001828">
    <property type="term" value="P:inner cell mass cellular morphogenesis"/>
    <property type="evidence" value="ECO:0000316"/>
    <property type="project" value="MGI"/>
</dbReference>
<dbReference type="GO" id="GO:0035556">
    <property type="term" value="P:intracellular signal transduction"/>
    <property type="evidence" value="ECO:0000250"/>
    <property type="project" value="UniProtKB"/>
</dbReference>
<dbReference type="GO" id="GO:0030216">
    <property type="term" value="P:keratinocyte differentiation"/>
    <property type="evidence" value="ECO:0000316"/>
    <property type="project" value="MGI"/>
</dbReference>
<dbReference type="GO" id="GO:0090090">
    <property type="term" value="P:negative regulation of canonical Wnt signaling pathway"/>
    <property type="evidence" value="ECO:0000316"/>
    <property type="project" value="MGI"/>
</dbReference>
<dbReference type="GO" id="GO:0045736">
    <property type="term" value="P:negative regulation of cyclin-dependent protein serine/threonine kinase activity"/>
    <property type="evidence" value="ECO:0000250"/>
    <property type="project" value="UniProtKB"/>
</dbReference>
<dbReference type="GO" id="GO:1900181">
    <property type="term" value="P:negative regulation of protein localization to nucleus"/>
    <property type="evidence" value="ECO:0000315"/>
    <property type="project" value="UniProtKB"/>
</dbReference>
<dbReference type="GO" id="GO:1900227">
    <property type="term" value="P:positive regulation of NLRP3 inflammasome complex assembly"/>
    <property type="evidence" value="ECO:0000314"/>
    <property type="project" value="UniProtKB"/>
</dbReference>
<dbReference type="GO" id="GO:0008104">
    <property type="term" value="P:protein localization"/>
    <property type="evidence" value="ECO:0000314"/>
    <property type="project" value="MGI"/>
</dbReference>
<dbReference type="GO" id="GO:0006468">
    <property type="term" value="P:protein phosphorylation"/>
    <property type="evidence" value="ECO:0000250"/>
    <property type="project" value="UniProtKB"/>
</dbReference>
<dbReference type="GO" id="GO:0046620">
    <property type="term" value="P:regulation of organ growth"/>
    <property type="evidence" value="ECO:0000315"/>
    <property type="project" value="MGI"/>
</dbReference>
<dbReference type="GO" id="GO:0017015">
    <property type="term" value="P:regulation of transforming growth factor beta receptor signaling pathway"/>
    <property type="evidence" value="ECO:0000315"/>
    <property type="project" value="UniProtKB"/>
</dbReference>
<dbReference type="CDD" id="cd21777">
    <property type="entry name" value="MobB_LATS2"/>
    <property type="match status" value="1"/>
</dbReference>
<dbReference type="CDD" id="cd14398">
    <property type="entry name" value="UBA_LATS2"/>
    <property type="match status" value="1"/>
</dbReference>
<dbReference type="FunFam" id="3.30.200.20:FF:001246">
    <property type="entry name" value="Large tumor suppressor kinase 1"/>
    <property type="match status" value="1"/>
</dbReference>
<dbReference type="FunFam" id="1.10.510.10:FF:000086">
    <property type="entry name" value="Non-specific serine/threonine protein kinase"/>
    <property type="match status" value="1"/>
</dbReference>
<dbReference type="FunFam" id="1.10.510.10:FF:000199">
    <property type="entry name" value="Non-specific serine/threonine protein kinase"/>
    <property type="match status" value="1"/>
</dbReference>
<dbReference type="FunFam" id="1.10.8.10:FF:000029">
    <property type="entry name" value="Serine/threonine-protein kinase LATS1 isoform 1"/>
    <property type="match status" value="1"/>
</dbReference>
<dbReference type="Gene3D" id="1.10.8.10">
    <property type="entry name" value="DNA helicase RuvA subunit, C-terminal domain"/>
    <property type="match status" value="1"/>
</dbReference>
<dbReference type="Gene3D" id="3.30.200.20">
    <property type="entry name" value="Phosphorylase Kinase, domain 1"/>
    <property type="match status" value="1"/>
</dbReference>
<dbReference type="Gene3D" id="1.10.510.10">
    <property type="entry name" value="Transferase(Phosphotransferase) domain 1"/>
    <property type="match status" value="2"/>
</dbReference>
<dbReference type="InterPro" id="IPR000961">
    <property type="entry name" value="AGC-kinase_C"/>
</dbReference>
<dbReference type="InterPro" id="IPR011009">
    <property type="entry name" value="Kinase-like_dom_sf"/>
</dbReference>
<dbReference type="InterPro" id="IPR017892">
    <property type="entry name" value="Pkinase_C"/>
</dbReference>
<dbReference type="InterPro" id="IPR000719">
    <property type="entry name" value="Prot_kinase_dom"/>
</dbReference>
<dbReference type="InterPro" id="IPR017441">
    <property type="entry name" value="Protein_kinase_ATP_BS"/>
</dbReference>
<dbReference type="InterPro" id="IPR008271">
    <property type="entry name" value="Ser/Thr_kinase_AS"/>
</dbReference>
<dbReference type="InterPro" id="IPR050236">
    <property type="entry name" value="Ser_Thr_kinase_AGC"/>
</dbReference>
<dbReference type="InterPro" id="IPR015940">
    <property type="entry name" value="UBA"/>
</dbReference>
<dbReference type="InterPro" id="IPR009060">
    <property type="entry name" value="UBA-like_sf"/>
</dbReference>
<dbReference type="PANTHER" id="PTHR24356">
    <property type="entry name" value="SERINE/THREONINE-PROTEIN KINASE"/>
    <property type="match status" value="1"/>
</dbReference>
<dbReference type="PANTHER" id="PTHR24356:SF149">
    <property type="entry name" value="SERINE_THREONINE-PROTEIN KINASE LATS2"/>
    <property type="match status" value="1"/>
</dbReference>
<dbReference type="Pfam" id="PF00069">
    <property type="entry name" value="Pkinase"/>
    <property type="match status" value="2"/>
</dbReference>
<dbReference type="Pfam" id="PF00433">
    <property type="entry name" value="Pkinase_C"/>
    <property type="match status" value="1"/>
</dbReference>
<dbReference type="SMART" id="SM00133">
    <property type="entry name" value="S_TK_X"/>
    <property type="match status" value="1"/>
</dbReference>
<dbReference type="SMART" id="SM00220">
    <property type="entry name" value="S_TKc"/>
    <property type="match status" value="1"/>
</dbReference>
<dbReference type="SUPFAM" id="SSF56112">
    <property type="entry name" value="Protein kinase-like (PK-like)"/>
    <property type="match status" value="1"/>
</dbReference>
<dbReference type="SUPFAM" id="SSF46934">
    <property type="entry name" value="UBA-like"/>
    <property type="match status" value="1"/>
</dbReference>
<dbReference type="PROSITE" id="PS51285">
    <property type="entry name" value="AGC_KINASE_CTER"/>
    <property type="match status" value="1"/>
</dbReference>
<dbReference type="PROSITE" id="PS00107">
    <property type="entry name" value="PROTEIN_KINASE_ATP"/>
    <property type="match status" value="1"/>
</dbReference>
<dbReference type="PROSITE" id="PS50011">
    <property type="entry name" value="PROTEIN_KINASE_DOM"/>
    <property type="match status" value="1"/>
</dbReference>
<dbReference type="PROSITE" id="PS00108">
    <property type="entry name" value="PROTEIN_KINASE_ST"/>
    <property type="match status" value="1"/>
</dbReference>
<dbReference type="PROSITE" id="PS50030">
    <property type="entry name" value="UBA"/>
    <property type="match status" value="1"/>
</dbReference>
<feature type="chain" id="PRO_0000086235" description="Serine/threonine-protein kinase LATS2">
    <location>
        <begin position="1"/>
        <end position="1042"/>
    </location>
</feature>
<feature type="domain" description="UBA" evidence="5">
    <location>
        <begin position="97"/>
        <end position="138"/>
    </location>
</feature>
<feature type="domain" description="Protein kinase" evidence="4">
    <location>
        <begin position="626"/>
        <end position="931"/>
    </location>
</feature>
<feature type="domain" description="AGC-kinase C-terminal" evidence="6">
    <location>
        <begin position="932"/>
        <end position="1010"/>
    </location>
</feature>
<feature type="region of interest" description="Disordered" evidence="8">
    <location>
        <begin position="23"/>
        <end position="44"/>
    </location>
</feature>
<feature type="region of interest" description="Interaction with ubiquitinated AMOTL2" evidence="3">
    <location>
        <begin position="100"/>
        <end position="140"/>
    </location>
</feature>
<feature type="region of interest" description="Disordered" evidence="8">
    <location>
        <begin position="237"/>
        <end position="282"/>
    </location>
</feature>
<feature type="region of interest" description="Disordered" evidence="8">
    <location>
        <begin position="378"/>
        <end position="399"/>
    </location>
</feature>
<feature type="region of interest" description="Disordered" evidence="8">
    <location>
        <begin position="442"/>
        <end position="481"/>
    </location>
</feature>
<feature type="region of interest" description="Disordered" evidence="8">
    <location>
        <begin position="501"/>
        <end position="550"/>
    </location>
</feature>
<feature type="region of interest" description="Disordered" evidence="8">
    <location>
        <begin position="1014"/>
        <end position="1042"/>
    </location>
</feature>
<feature type="short sequence motif" description="PPxY motif">
    <location>
        <begin position="472"/>
        <end position="475"/>
    </location>
</feature>
<feature type="compositionally biased region" description="Polar residues" evidence="8">
    <location>
        <begin position="30"/>
        <end position="44"/>
    </location>
</feature>
<feature type="compositionally biased region" description="Polar residues" evidence="8">
    <location>
        <begin position="258"/>
        <end position="267"/>
    </location>
</feature>
<feature type="compositionally biased region" description="Basic and acidic residues" evidence="8">
    <location>
        <begin position="507"/>
        <end position="530"/>
    </location>
</feature>
<feature type="compositionally biased region" description="Basic and acidic residues" evidence="8">
    <location>
        <begin position="541"/>
        <end position="550"/>
    </location>
</feature>
<feature type="active site" description="Proton acceptor" evidence="2 4 7">
    <location>
        <position position="749"/>
    </location>
</feature>
<feature type="binding site" evidence="2 4">
    <location>
        <begin position="632"/>
        <end position="640"/>
    </location>
    <ligand>
        <name>ATP</name>
        <dbReference type="ChEBI" id="CHEBI:30616"/>
    </ligand>
</feature>
<feature type="binding site" evidence="3 4">
    <location>
        <position position="655"/>
    </location>
    <ligand>
        <name>ATP</name>
        <dbReference type="ChEBI" id="CHEBI:30616"/>
    </ligand>
</feature>
<feature type="modified residue" description="Phosphoserine; by AURKA" evidence="3">
    <location>
        <position position="82"/>
    </location>
</feature>
<feature type="modified residue" description="Phosphothreonine" evidence="3">
    <location>
        <position position="267"/>
    </location>
</feature>
<feature type="modified residue" description="Phosphoserine" evidence="3">
    <location>
        <position position="362"/>
    </location>
</feature>
<feature type="modified residue" description="Phosphoserine" evidence="3">
    <location>
        <position position="534"/>
    </location>
</feature>
<feature type="modified residue" description="Phosphothreonine" evidence="3">
    <location>
        <position position="999"/>
    </location>
</feature>
<feature type="sequence conflict" description="In Ref. 1; BAA92380." evidence="12" ref="1">
    <original>Q</original>
    <variation>R</variation>
    <location>
        <position position="184"/>
    </location>
</feature>
<feature type="sequence conflict" description="In Ref. 2; BAC26704." evidence="12" ref="2">
    <original>Q</original>
    <variation>R</variation>
    <location>
        <position position="279"/>
    </location>
</feature>
<feature type="sequence conflict" description="In Ref. 2; BAC26704." evidence="12" ref="2">
    <original>E</original>
    <variation>K</variation>
    <location>
        <position position="549"/>
    </location>
</feature>
<feature type="sequence conflict" description="In Ref. 1; BAA92380." evidence="12" ref="1">
    <original>M</original>
    <variation>V</variation>
    <location>
        <position position="589"/>
    </location>
</feature>
<feature type="helix" evidence="15">
    <location>
        <begin position="100"/>
        <end position="110"/>
    </location>
</feature>
<feature type="helix" evidence="15">
    <location>
        <begin position="113"/>
        <end position="123"/>
    </location>
</feature>
<feature type="helix" evidence="15">
    <location>
        <begin position="128"/>
        <end position="138"/>
    </location>
</feature>
<name>LATS2_MOUSE</name>
<comment type="function">
    <text evidence="3 10 11">Negative regulator of YAP1 in the Hippo signaling pathway that plays a pivotal role in organ size control and tumor suppression by restricting proliferation and promoting apoptosis (By similarity). The core of this pathway is composed of a kinase cascade wherein STK3/MST2 and STK4/MST1, in complex with its regulatory protein SAV1, phosphorylates and activates LATS1/2 in complex with its regulatory protein MOB1, which in turn phosphorylates and inactivates YAP1 oncoprotein and WWTR1/TAZ (By similarity). Phosphorylation of YAP1 by LATS2 inhibits its translocation into the nucleus to regulate cellular genes important for cell proliferation, cell death, and cell migration (By similarity). Also phosphorylates YAP1 in response to cell contact inhibition-driven WWP1 ubiquitination of AMOTL2, which results in LATS2 activation (By similarity). Acts as a tumor suppressor which plays a critical role in centrosome duplication, maintenance of mitotic fidelity and genomic stability (PubMed:15343267). Negatively regulates G1/S transition by down-regulating cyclin E/CDK2 kinase activity (By similarity). Negative regulator of the androgen receptor (By similarity). Phosphorylates SNAI1 in the nucleus leading to its nuclear retention and stabilization, which enhances its epithelial-mesenchymal transition and tumor cell invasion/migration activities (By similarity). This tumor-promoting activity is independent of its effects upon YAP1 or WWTR1/TAZ (By similarity). Acts as an activator of the NLRP3 inflammasome by mediating phosphorylation of 'Ser-265' of NLRP3 following NLRP3 palmitoylation, promoting NLRP3 activation by NEK7 (PubMed:39173637).</text>
</comment>
<comment type="catalytic activity">
    <reaction evidence="3">
        <text>L-seryl-[protein] + ATP = O-phospho-L-seryl-[protein] + ADP + H(+)</text>
        <dbReference type="Rhea" id="RHEA:17989"/>
        <dbReference type="Rhea" id="RHEA-COMP:9863"/>
        <dbReference type="Rhea" id="RHEA-COMP:11604"/>
        <dbReference type="ChEBI" id="CHEBI:15378"/>
        <dbReference type="ChEBI" id="CHEBI:29999"/>
        <dbReference type="ChEBI" id="CHEBI:30616"/>
        <dbReference type="ChEBI" id="CHEBI:83421"/>
        <dbReference type="ChEBI" id="CHEBI:456216"/>
        <dbReference type="EC" id="2.7.11.1"/>
    </reaction>
</comment>
<comment type="catalytic activity">
    <reaction evidence="3">
        <text>L-threonyl-[protein] + ATP = O-phospho-L-threonyl-[protein] + ADP + H(+)</text>
        <dbReference type="Rhea" id="RHEA:46608"/>
        <dbReference type="Rhea" id="RHEA-COMP:11060"/>
        <dbReference type="Rhea" id="RHEA-COMP:11605"/>
        <dbReference type="ChEBI" id="CHEBI:15378"/>
        <dbReference type="ChEBI" id="CHEBI:30013"/>
        <dbReference type="ChEBI" id="CHEBI:30616"/>
        <dbReference type="ChEBI" id="CHEBI:61977"/>
        <dbReference type="ChEBI" id="CHEBI:456216"/>
        <dbReference type="EC" id="2.7.11.1"/>
    </reaction>
</comment>
<comment type="cofactor">
    <cofactor evidence="1">
        <name>Mg(2+)</name>
        <dbReference type="ChEBI" id="CHEBI:18420"/>
    </cofactor>
</comment>
<comment type="subunit">
    <text evidence="3">Interacts with and is phosphorylated by AURKA. Binds to AR (By similarity). Interacts with AJUBA during mitosis and this complex regulates organization of the spindle apparatus through recruitment of gamma-tubulin to the centrosome. Interacts (via PPxY motif) with YAP1 (via WW domains). Interacts with MOB1A and MOB1B (By similarity). Interacts with LIMD1, WTIP and AJUBA (By similarity). Interacts with SNAI1 (By similarity). Interacts with WWC1, WWC2 and WWC3 (via their WW domains) (By similarity). Interacts (via UBA domain) with ubiquitinated AMOTL2; the interaction promotes LATS2 phosphorylation of YAP1 (By similarity).</text>
</comment>
<comment type="subcellular location">
    <subcellularLocation>
        <location evidence="10">Cytoplasm</location>
        <location evidence="10">Cytoskeleton</location>
        <location evidence="10">Microtubule organizing center</location>
        <location evidence="10">Centrosome</location>
    </subcellularLocation>
    <subcellularLocation>
        <location evidence="10">Cytoplasm</location>
    </subcellularLocation>
    <subcellularLocation>
        <location evidence="10">Cytoplasm</location>
        <location evidence="10">Cytoskeleton</location>
        <location evidence="10">Spindle pole</location>
    </subcellularLocation>
    <subcellularLocation>
        <location evidence="1">Nucleus</location>
    </subcellularLocation>
    <text evidence="1">Colocalizes with AURKA at the centrosomes during interphase, early prophase and cytokinesis (By similarity). Migrates to the spindle poles during mitosis, and to the midbody during cytokinesis. Translocates to the nucleus upon mitotic stress by nocodazole treatment (By similarity).</text>
</comment>
<comment type="tissue specificity">
    <text evidence="9">Expressed at high levels in ovary and testis and at lower levels in all other tissues examined.</text>
</comment>
<comment type="PTM">
    <text evidence="3">Autophosphorylated and phosphorylated during M-phase and the G1/S-phase of the cell cycle. Phosphorylated and activated by STK3/MST2. Phosphorylated by MAP4Ks; in parallel to STK3/MST2 and resulting to its activation. Phosphorylation by NUAK2 may regulate its activity in phosphorylation and inactivation YAP1.</text>
</comment>
<comment type="similarity">
    <text evidence="12">Belongs to the protein kinase superfamily. AGC Ser/Thr protein kinase family.</text>
</comment>
<comment type="sequence caution" evidence="12">
    <conflict type="frameshift">
        <sequence resource="EMBL-CDS" id="BAC26704"/>
    </conflict>
</comment>
<reference evidence="12 14" key="1">
    <citation type="journal article" date="2000" name="Genomics">
        <title>Structure, expression, and chromosome mapping of LATS2, a mammalian homologue of the Drosophila tumor suppressor gene lats/warts.</title>
        <authorList>
            <person name="Yabuta N."/>
            <person name="Fujii T."/>
            <person name="Copeland N.G."/>
            <person name="Gilbert D.J."/>
            <person name="Jenkins N.A."/>
            <person name="Nishiguchi H."/>
            <person name="Endo Y."/>
            <person name="Toji S."/>
            <person name="Tanaka H."/>
            <person name="Nishimune Y."/>
            <person name="Nojima H."/>
        </authorList>
    </citation>
    <scope>NUCLEOTIDE SEQUENCE [MRNA]</scope>
    <scope>TISSUE SPECIFICITY</scope>
    <source>
        <tissue evidence="9">Testis</tissue>
    </source>
</reference>
<reference key="2">
    <citation type="journal article" date="2005" name="Science">
        <title>The transcriptional landscape of the mammalian genome.</title>
        <authorList>
            <person name="Carninci P."/>
            <person name="Kasukawa T."/>
            <person name="Katayama S."/>
            <person name="Gough J."/>
            <person name="Frith M.C."/>
            <person name="Maeda N."/>
            <person name="Oyama R."/>
            <person name="Ravasi T."/>
            <person name="Lenhard B."/>
            <person name="Wells C."/>
            <person name="Kodzius R."/>
            <person name="Shimokawa K."/>
            <person name="Bajic V.B."/>
            <person name="Brenner S.E."/>
            <person name="Batalov S."/>
            <person name="Forrest A.R."/>
            <person name="Zavolan M."/>
            <person name="Davis M.J."/>
            <person name="Wilming L.G."/>
            <person name="Aidinis V."/>
            <person name="Allen J.E."/>
            <person name="Ambesi-Impiombato A."/>
            <person name="Apweiler R."/>
            <person name="Aturaliya R.N."/>
            <person name="Bailey T.L."/>
            <person name="Bansal M."/>
            <person name="Baxter L."/>
            <person name="Beisel K.W."/>
            <person name="Bersano T."/>
            <person name="Bono H."/>
            <person name="Chalk A.M."/>
            <person name="Chiu K.P."/>
            <person name="Choudhary V."/>
            <person name="Christoffels A."/>
            <person name="Clutterbuck D.R."/>
            <person name="Crowe M.L."/>
            <person name="Dalla E."/>
            <person name="Dalrymple B.P."/>
            <person name="de Bono B."/>
            <person name="Della Gatta G."/>
            <person name="di Bernardo D."/>
            <person name="Down T."/>
            <person name="Engstrom P."/>
            <person name="Fagiolini M."/>
            <person name="Faulkner G."/>
            <person name="Fletcher C.F."/>
            <person name="Fukushima T."/>
            <person name="Furuno M."/>
            <person name="Futaki S."/>
            <person name="Gariboldi M."/>
            <person name="Georgii-Hemming P."/>
            <person name="Gingeras T.R."/>
            <person name="Gojobori T."/>
            <person name="Green R.E."/>
            <person name="Gustincich S."/>
            <person name="Harbers M."/>
            <person name="Hayashi Y."/>
            <person name="Hensch T.K."/>
            <person name="Hirokawa N."/>
            <person name="Hill D."/>
            <person name="Huminiecki L."/>
            <person name="Iacono M."/>
            <person name="Ikeo K."/>
            <person name="Iwama A."/>
            <person name="Ishikawa T."/>
            <person name="Jakt M."/>
            <person name="Kanapin A."/>
            <person name="Katoh M."/>
            <person name="Kawasawa Y."/>
            <person name="Kelso J."/>
            <person name="Kitamura H."/>
            <person name="Kitano H."/>
            <person name="Kollias G."/>
            <person name="Krishnan S.P."/>
            <person name="Kruger A."/>
            <person name="Kummerfeld S.K."/>
            <person name="Kurochkin I.V."/>
            <person name="Lareau L.F."/>
            <person name="Lazarevic D."/>
            <person name="Lipovich L."/>
            <person name="Liu J."/>
            <person name="Liuni S."/>
            <person name="McWilliam S."/>
            <person name="Madan Babu M."/>
            <person name="Madera M."/>
            <person name="Marchionni L."/>
            <person name="Matsuda H."/>
            <person name="Matsuzawa S."/>
            <person name="Miki H."/>
            <person name="Mignone F."/>
            <person name="Miyake S."/>
            <person name="Morris K."/>
            <person name="Mottagui-Tabar S."/>
            <person name="Mulder N."/>
            <person name="Nakano N."/>
            <person name="Nakauchi H."/>
            <person name="Ng P."/>
            <person name="Nilsson R."/>
            <person name="Nishiguchi S."/>
            <person name="Nishikawa S."/>
            <person name="Nori F."/>
            <person name="Ohara O."/>
            <person name="Okazaki Y."/>
            <person name="Orlando V."/>
            <person name="Pang K.C."/>
            <person name="Pavan W.J."/>
            <person name="Pavesi G."/>
            <person name="Pesole G."/>
            <person name="Petrovsky N."/>
            <person name="Piazza S."/>
            <person name="Reed J."/>
            <person name="Reid J.F."/>
            <person name="Ring B.Z."/>
            <person name="Ringwald M."/>
            <person name="Rost B."/>
            <person name="Ruan Y."/>
            <person name="Salzberg S.L."/>
            <person name="Sandelin A."/>
            <person name="Schneider C."/>
            <person name="Schoenbach C."/>
            <person name="Sekiguchi K."/>
            <person name="Semple C.A."/>
            <person name="Seno S."/>
            <person name="Sessa L."/>
            <person name="Sheng Y."/>
            <person name="Shibata Y."/>
            <person name="Shimada H."/>
            <person name="Shimada K."/>
            <person name="Silva D."/>
            <person name="Sinclair B."/>
            <person name="Sperling S."/>
            <person name="Stupka E."/>
            <person name="Sugiura K."/>
            <person name="Sultana R."/>
            <person name="Takenaka Y."/>
            <person name="Taki K."/>
            <person name="Tammoja K."/>
            <person name="Tan S.L."/>
            <person name="Tang S."/>
            <person name="Taylor M.S."/>
            <person name="Tegner J."/>
            <person name="Teichmann S.A."/>
            <person name="Ueda H.R."/>
            <person name="van Nimwegen E."/>
            <person name="Verardo R."/>
            <person name="Wei C.L."/>
            <person name="Yagi K."/>
            <person name="Yamanishi H."/>
            <person name="Zabarovsky E."/>
            <person name="Zhu S."/>
            <person name="Zimmer A."/>
            <person name="Hide W."/>
            <person name="Bult C."/>
            <person name="Grimmond S.M."/>
            <person name="Teasdale R.D."/>
            <person name="Liu E.T."/>
            <person name="Brusic V."/>
            <person name="Quackenbush J."/>
            <person name="Wahlestedt C."/>
            <person name="Mattick J.S."/>
            <person name="Hume D.A."/>
            <person name="Kai C."/>
            <person name="Sasaki D."/>
            <person name="Tomaru Y."/>
            <person name="Fukuda S."/>
            <person name="Kanamori-Katayama M."/>
            <person name="Suzuki M."/>
            <person name="Aoki J."/>
            <person name="Arakawa T."/>
            <person name="Iida J."/>
            <person name="Imamura K."/>
            <person name="Itoh M."/>
            <person name="Kato T."/>
            <person name="Kawaji H."/>
            <person name="Kawagashira N."/>
            <person name="Kawashima T."/>
            <person name="Kojima M."/>
            <person name="Kondo S."/>
            <person name="Konno H."/>
            <person name="Nakano K."/>
            <person name="Ninomiya N."/>
            <person name="Nishio T."/>
            <person name="Okada M."/>
            <person name="Plessy C."/>
            <person name="Shibata K."/>
            <person name="Shiraki T."/>
            <person name="Suzuki S."/>
            <person name="Tagami M."/>
            <person name="Waki K."/>
            <person name="Watahiki A."/>
            <person name="Okamura-Oho Y."/>
            <person name="Suzuki H."/>
            <person name="Kawai J."/>
            <person name="Hayashizaki Y."/>
        </authorList>
    </citation>
    <scope>NUCLEOTIDE SEQUENCE [LARGE SCALE MRNA]</scope>
    <source>
        <strain>C57BL/6J</strain>
        <tissue>Testis</tissue>
    </source>
</reference>
<reference evidence="13" key="3">
    <citation type="journal article" date="2004" name="Genome Res.">
        <title>The status, quality, and expansion of the NIH full-length cDNA project: the Mammalian Gene Collection (MGC).</title>
        <authorList>
            <consortium name="The MGC Project Team"/>
        </authorList>
    </citation>
    <scope>NUCLEOTIDE SEQUENCE [LARGE SCALE MRNA]</scope>
    <source>
        <strain evidence="13">C57BL/6J</strain>
        <tissue evidence="13">Brain</tissue>
    </source>
</reference>
<reference evidence="12" key="4">
    <citation type="journal article" date="2004" name="EMBO J.">
        <title>Lats2/Kpm is required for embryonic development, proliferation control and genomic integrity.</title>
        <authorList>
            <person name="McPherson J.P."/>
            <person name="Tamblyn L."/>
            <person name="Elia A."/>
            <person name="Migon E."/>
            <person name="Shehabeldin A."/>
            <person name="Matysiak-Zablocki E."/>
            <person name="Lemmers B."/>
            <person name="Salmena L."/>
            <person name="Hakem A."/>
            <person name="Fish J."/>
            <person name="Kassam F."/>
            <person name="Squire J."/>
            <person name="Bruneau B.G."/>
            <person name="Hande M.P."/>
            <person name="Hakem R."/>
        </authorList>
    </citation>
    <scope>FUNCTION</scope>
    <scope>SUBCELLULAR LOCATION</scope>
</reference>
<reference key="5">
    <citation type="journal article" date="2024" name="Mol. Cell">
        <title>Consecutive palmitoylation and phosphorylation orchestrates NLRP3 membrane trafficking and inflammasome activation.</title>
        <authorList>
            <person name="Nie L."/>
            <person name="Fei C."/>
            <person name="Fan Y."/>
            <person name="Dang F."/>
            <person name="Zhao Z."/>
            <person name="Zhu T."/>
            <person name="Wu X."/>
            <person name="Dai T."/>
            <person name="Balasubramanian A."/>
            <person name="Pan J."/>
            <person name="Hu Y."/>
            <person name="Luo H.R."/>
            <person name="Wei W."/>
            <person name="Chen J."/>
        </authorList>
    </citation>
    <scope>FUNCTION</scope>
</reference>
<reference key="6">
    <citation type="submission" date="2005-11" db="PDB data bank">
        <title>Solution structure of RSGI RUH-038, a UBA domain from mouse LATS2 (large tumor suppressor homolog 2).</title>
        <authorList>
            <consortium name="RIKEN structural genomics initiative (RSGI)"/>
        </authorList>
    </citation>
    <scope>STRUCTURE BY NMR OF 98-138</scope>
</reference>
<sequence>MRPKTFPATTYSGNSRQRLQEIREGLKQPSKASTQGLLVGPNSDTSLDAKVLGSKDASRQQQMRATPKFGPYQKALREIRYSLLPFANESGTSAAAEVNRQMLQELVNAGCDQEMAGRALKQTGSRSIEAALEYISKMGYLDPRNEQIVRVIKQTSPGKGLAPTPVTRRPSFEGTGEALPSYHQLGGANYEGPAALEEMPRQYLDFLFPGAGAGTHGAQAHQHPPKGYSTAVEPSAHFPGTHYGRGHLLSEQPGYGVQRSSSFQNKTPPDAYSSMAKAQGGPPASLTFPAHAGLYTASHHKPAATPPGAHPLHVLGTRGPTFTGESSAQAVLAPSRNSLNADLYELGSTVPWSAAPLARRDSLQKQGLEASRPHVAFRAGPSRTNSFNNPQPEPSLPAPNTVTAVTAAHILHPVKSVRVLRPEPQTAVGPSHPAWVAAPTAPATESLETKEGSAGPHPLDVDYGGSERRCPPPPYPKHLLLPSKSEQYSVDLDSLCTSVQQSLRGGTEQDRSDKSHKGAKGDKAGRDKKQIQTSPVPVRKNSRDEEKRESRIKSYSPYAFKFFMEQHVENVIKTYQQKVSRRLQLEQEMAKAGLCEAEQEQMRKILYQKESNYNRLKRAKMDKSMFVKIKTLGIGAFGEVCLACKLDTHALYAMKTLRKKDVLNRNQVAHVKAERDILAEADNEWVVKLYYSFQDKDSLYFVMDYIPGGDMMSLLIRMEVFPEHLARFYIAELTLAIESVHKMGFIHRDIKPDNILIDLDGHIKLTDFGLCTGFRWTHNSKYYQKGNHMRQDSMEPGDLWDDVSNCRCGDRLKTLEQRAQKQHQRCLAHSLVGTPNYIAPEVLLRKGYTQLCDWWSVGVILFEMLVGQPPFLAPTPTETQLKVINWESTLHIPTQVRLSAEARDLITKLCCAADCRLGRDGADDLKAHPFFNTIDFSRDIRKQPAPYVPTISHPMDTSNFDPVDEESPWHEASGESAKAWDTLASPSSKHPEHAFYEFTFRRFFDDNGYPFRCPKPSEPAESADPGDADLEGAAEGCQPVYV</sequence>
<keyword id="KW-0002">3D-structure</keyword>
<keyword id="KW-0067">ATP-binding</keyword>
<keyword id="KW-0131">Cell cycle</keyword>
<keyword id="KW-0132">Cell division</keyword>
<keyword id="KW-0963">Cytoplasm</keyword>
<keyword id="KW-0206">Cytoskeleton</keyword>
<keyword id="KW-0418">Kinase</keyword>
<keyword id="KW-0460">Magnesium</keyword>
<keyword id="KW-0479">Metal-binding</keyword>
<keyword id="KW-0498">Mitosis</keyword>
<keyword id="KW-0547">Nucleotide-binding</keyword>
<keyword id="KW-0539">Nucleus</keyword>
<keyword id="KW-0597">Phosphoprotein</keyword>
<keyword id="KW-1185">Reference proteome</keyword>
<keyword id="KW-0723">Serine/threonine-protein kinase</keyword>
<keyword id="KW-0808">Transferase</keyword>
<keyword id="KW-0043">Tumor suppressor</keyword>
<evidence type="ECO:0000250" key="1"/>
<evidence type="ECO:0000250" key="2">
    <source>
        <dbReference type="UniProtKB" id="P22612"/>
    </source>
</evidence>
<evidence type="ECO:0000250" key="3">
    <source>
        <dbReference type="UniProtKB" id="Q9NRM7"/>
    </source>
</evidence>
<evidence type="ECO:0000255" key="4">
    <source>
        <dbReference type="PROSITE-ProRule" id="PRU00159"/>
    </source>
</evidence>
<evidence type="ECO:0000255" key="5">
    <source>
        <dbReference type="PROSITE-ProRule" id="PRU00212"/>
    </source>
</evidence>
<evidence type="ECO:0000255" key="6">
    <source>
        <dbReference type="PROSITE-ProRule" id="PRU00618"/>
    </source>
</evidence>
<evidence type="ECO:0000255" key="7">
    <source>
        <dbReference type="PROSITE-ProRule" id="PRU10027"/>
    </source>
</evidence>
<evidence type="ECO:0000256" key="8">
    <source>
        <dbReference type="SAM" id="MobiDB-lite"/>
    </source>
</evidence>
<evidence type="ECO:0000269" key="9">
    <source>
    </source>
</evidence>
<evidence type="ECO:0000269" key="10">
    <source>
    </source>
</evidence>
<evidence type="ECO:0000269" key="11">
    <source>
    </source>
</evidence>
<evidence type="ECO:0000305" key="12"/>
<evidence type="ECO:0000312" key="13">
    <source>
        <dbReference type="EMBL" id="AAH53028.1"/>
    </source>
</evidence>
<evidence type="ECO:0000312" key="14">
    <source>
        <dbReference type="EMBL" id="BAA92380.1"/>
    </source>
</evidence>
<evidence type="ECO:0007829" key="15">
    <source>
        <dbReference type="PDB" id="2COS"/>
    </source>
</evidence>
<gene>
    <name evidence="13" type="primary">Lats2</name>
</gene>